<comment type="function">
    <text evidence="1">Required for maturation of 30S ribosomal subunits.</text>
</comment>
<comment type="subcellular location">
    <subcellularLocation>
        <location evidence="1">Cytoplasm</location>
    </subcellularLocation>
</comment>
<comment type="similarity">
    <text evidence="1">Belongs to the RimP family.</text>
</comment>
<organism>
    <name type="scientific">Cupriavidus necator (strain ATCC 17699 / DSM 428 / KCTC 22496 / NCIMB 10442 / H16 / Stanier 337)</name>
    <name type="common">Ralstonia eutropha</name>
    <dbReference type="NCBI Taxonomy" id="381666"/>
    <lineage>
        <taxon>Bacteria</taxon>
        <taxon>Pseudomonadati</taxon>
        <taxon>Pseudomonadota</taxon>
        <taxon>Betaproteobacteria</taxon>
        <taxon>Burkholderiales</taxon>
        <taxon>Burkholderiaceae</taxon>
        <taxon>Cupriavidus</taxon>
    </lineage>
</organism>
<accession>Q0K9B7</accession>
<evidence type="ECO:0000255" key="1">
    <source>
        <dbReference type="HAMAP-Rule" id="MF_01077"/>
    </source>
</evidence>
<gene>
    <name evidence="1" type="primary">rimP</name>
    <name type="ordered locus">H16_A2308</name>
</gene>
<proteinExistence type="inferred from homology"/>
<sequence>MHLADLIETTLSGMGYELVELERAPAGLLRVYIDQPETGIAIEDCEKVSRQLTHVFTVENVDYERLEVSSPGLDRPLKKLADYVRFAGEEARVTLRLPVNGQKNFTGILREPTGAAGEEKIGLEFEGKDGPALLEFAVSDVDKARLVPVIDFKGNQRKGNKQ</sequence>
<dbReference type="EMBL" id="AM260479">
    <property type="protein sequence ID" value="CAJ93404.1"/>
    <property type="molecule type" value="Genomic_DNA"/>
</dbReference>
<dbReference type="RefSeq" id="WP_010809481.1">
    <property type="nucleotide sequence ID" value="NZ_CP039287.1"/>
</dbReference>
<dbReference type="SMR" id="Q0K9B7"/>
<dbReference type="STRING" id="381666.H16_A2308"/>
<dbReference type="KEGG" id="reh:H16_A2308"/>
<dbReference type="eggNOG" id="COG0779">
    <property type="taxonomic scope" value="Bacteria"/>
</dbReference>
<dbReference type="HOGENOM" id="CLU_070525_1_0_4"/>
<dbReference type="OrthoDB" id="9805006at2"/>
<dbReference type="Proteomes" id="UP000008210">
    <property type="component" value="Chromosome 1"/>
</dbReference>
<dbReference type="GO" id="GO:0005829">
    <property type="term" value="C:cytosol"/>
    <property type="evidence" value="ECO:0007669"/>
    <property type="project" value="TreeGrafter"/>
</dbReference>
<dbReference type="GO" id="GO:0000028">
    <property type="term" value="P:ribosomal small subunit assembly"/>
    <property type="evidence" value="ECO:0007669"/>
    <property type="project" value="TreeGrafter"/>
</dbReference>
<dbReference type="GO" id="GO:0006412">
    <property type="term" value="P:translation"/>
    <property type="evidence" value="ECO:0007669"/>
    <property type="project" value="TreeGrafter"/>
</dbReference>
<dbReference type="CDD" id="cd01734">
    <property type="entry name" value="YlxS_C"/>
    <property type="match status" value="1"/>
</dbReference>
<dbReference type="Gene3D" id="2.30.30.180">
    <property type="entry name" value="Ribosome maturation factor RimP, C-terminal domain"/>
    <property type="match status" value="1"/>
</dbReference>
<dbReference type="Gene3D" id="3.30.300.70">
    <property type="entry name" value="RimP-like superfamily, N-terminal"/>
    <property type="match status" value="1"/>
</dbReference>
<dbReference type="HAMAP" id="MF_01077">
    <property type="entry name" value="RimP"/>
    <property type="match status" value="1"/>
</dbReference>
<dbReference type="InterPro" id="IPR003728">
    <property type="entry name" value="Ribosome_maturation_RimP"/>
</dbReference>
<dbReference type="InterPro" id="IPR028998">
    <property type="entry name" value="RimP_C"/>
</dbReference>
<dbReference type="InterPro" id="IPR036847">
    <property type="entry name" value="RimP_C_sf"/>
</dbReference>
<dbReference type="InterPro" id="IPR028989">
    <property type="entry name" value="RimP_N"/>
</dbReference>
<dbReference type="InterPro" id="IPR035956">
    <property type="entry name" value="RimP_N_sf"/>
</dbReference>
<dbReference type="NCBIfam" id="NF000929">
    <property type="entry name" value="PRK00092.2-1"/>
    <property type="match status" value="1"/>
</dbReference>
<dbReference type="PANTHER" id="PTHR33867">
    <property type="entry name" value="RIBOSOME MATURATION FACTOR RIMP"/>
    <property type="match status" value="1"/>
</dbReference>
<dbReference type="PANTHER" id="PTHR33867:SF1">
    <property type="entry name" value="RIBOSOME MATURATION FACTOR RIMP"/>
    <property type="match status" value="1"/>
</dbReference>
<dbReference type="Pfam" id="PF17384">
    <property type="entry name" value="DUF150_C"/>
    <property type="match status" value="1"/>
</dbReference>
<dbReference type="Pfam" id="PF02576">
    <property type="entry name" value="RimP_N"/>
    <property type="match status" value="1"/>
</dbReference>
<dbReference type="SUPFAM" id="SSF74942">
    <property type="entry name" value="YhbC-like, C-terminal domain"/>
    <property type="match status" value="1"/>
</dbReference>
<dbReference type="SUPFAM" id="SSF75420">
    <property type="entry name" value="YhbC-like, N-terminal domain"/>
    <property type="match status" value="1"/>
</dbReference>
<feature type="chain" id="PRO_1000064752" description="Ribosome maturation factor RimP">
    <location>
        <begin position="1"/>
        <end position="162"/>
    </location>
</feature>
<reference key="1">
    <citation type="journal article" date="2006" name="Nat. Biotechnol.">
        <title>Genome sequence of the bioplastic-producing 'Knallgas' bacterium Ralstonia eutropha H16.</title>
        <authorList>
            <person name="Pohlmann A."/>
            <person name="Fricke W.F."/>
            <person name="Reinecke F."/>
            <person name="Kusian B."/>
            <person name="Liesegang H."/>
            <person name="Cramm R."/>
            <person name="Eitinger T."/>
            <person name="Ewering C."/>
            <person name="Poetter M."/>
            <person name="Schwartz E."/>
            <person name="Strittmatter A."/>
            <person name="Voss I."/>
            <person name="Gottschalk G."/>
            <person name="Steinbuechel A."/>
            <person name="Friedrich B."/>
            <person name="Bowien B."/>
        </authorList>
    </citation>
    <scope>NUCLEOTIDE SEQUENCE [LARGE SCALE GENOMIC DNA]</scope>
    <source>
        <strain>ATCC 17699 / DSM 428 / KCTC 22496 / NCIMB 10442 / H16 / Stanier 337</strain>
    </source>
</reference>
<name>RIMP_CUPNH</name>
<keyword id="KW-0963">Cytoplasm</keyword>
<keyword id="KW-1185">Reference proteome</keyword>
<keyword id="KW-0690">Ribosome biogenesis</keyword>
<protein>
    <recommendedName>
        <fullName evidence="1">Ribosome maturation factor RimP</fullName>
    </recommendedName>
</protein>